<accession>Q7NQH7</accession>
<keyword id="KW-0240">DNA-directed RNA polymerase</keyword>
<keyword id="KW-0548">Nucleotidyltransferase</keyword>
<keyword id="KW-1185">Reference proteome</keyword>
<keyword id="KW-0804">Transcription</keyword>
<keyword id="KW-0808">Transferase</keyword>
<feature type="chain" id="PRO_0000175293" description="DNA-directed RNA polymerase subunit alpha">
    <location>
        <begin position="1"/>
        <end position="327"/>
    </location>
</feature>
<feature type="region of interest" description="Alpha N-terminal domain (alpha-NTD)" evidence="1">
    <location>
        <begin position="1"/>
        <end position="233"/>
    </location>
</feature>
<feature type="region of interest" description="Alpha C-terminal domain (alpha-CTD)" evidence="1">
    <location>
        <begin position="247"/>
        <end position="327"/>
    </location>
</feature>
<proteinExistence type="inferred from homology"/>
<protein>
    <recommendedName>
        <fullName evidence="1">DNA-directed RNA polymerase subunit alpha</fullName>
        <shortName evidence="1">RNAP subunit alpha</shortName>
        <ecNumber evidence="1">2.7.7.6</ecNumber>
    </recommendedName>
    <alternativeName>
        <fullName evidence="1">RNA polymerase subunit alpha</fullName>
    </alternativeName>
    <alternativeName>
        <fullName evidence="1">Transcriptase subunit alpha</fullName>
    </alternativeName>
</protein>
<reference key="1">
    <citation type="journal article" date="2003" name="Proc. Natl. Acad. Sci. U.S.A.">
        <title>The complete genome sequence of Chromobacterium violaceum reveals remarkable and exploitable bacterial adaptability.</title>
        <authorList>
            <person name="Vasconcelos A.T.R."/>
            <person name="de Almeida D.F."/>
            <person name="Hungria M."/>
            <person name="Guimaraes C.T."/>
            <person name="Antonio R.V."/>
            <person name="Almeida F.C."/>
            <person name="de Almeida L.G.P."/>
            <person name="de Almeida R."/>
            <person name="Alves-Gomes J.A."/>
            <person name="Andrade E.M."/>
            <person name="Araripe J."/>
            <person name="de Araujo M.F.F."/>
            <person name="Astolfi-Filho S."/>
            <person name="Azevedo V."/>
            <person name="Baptista A.J."/>
            <person name="Bataus L.A.M."/>
            <person name="Batista J.S."/>
            <person name="Belo A."/>
            <person name="van den Berg C."/>
            <person name="Bogo M."/>
            <person name="Bonatto S."/>
            <person name="Bordignon J."/>
            <person name="Brigido M.M."/>
            <person name="Brito C.A."/>
            <person name="Brocchi M."/>
            <person name="Burity H.A."/>
            <person name="Camargo A.A."/>
            <person name="Cardoso D.D.P."/>
            <person name="Carneiro N.P."/>
            <person name="Carraro D.M."/>
            <person name="Carvalho C.M.B."/>
            <person name="Cascardo J.C.M."/>
            <person name="Cavada B.S."/>
            <person name="Chueire L.M.O."/>
            <person name="Creczynski-Pasa T.B."/>
            <person name="Cunha-Junior N.C."/>
            <person name="Fagundes N."/>
            <person name="Falcao C.L."/>
            <person name="Fantinatti F."/>
            <person name="Farias I.P."/>
            <person name="Felipe M.S.S."/>
            <person name="Ferrari L.P."/>
            <person name="Ferro J.A."/>
            <person name="Ferro M.I.T."/>
            <person name="Franco G.R."/>
            <person name="Freitas N.S.A."/>
            <person name="Furlan L.R."/>
            <person name="Gazzinelli R.T."/>
            <person name="Gomes E.A."/>
            <person name="Goncalves P.R."/>
            <person name="Grangeiro T.B."/>
            <person name="Grattapaglia D."/>
            <person name="Grisard E.C."/>
            <person name="Hanna E.S."/>
            <person name="Jardim S.N."/>
            <person name="Laurino J."/>
            <person name="Leoi L.C.T."/>
            <person name="Lima L.F.A."/>
            <person name="Loureiro M.F."/>
            <person name="Lyra M.C.C.P."/>
            <person name="Madeira H.M.F."/>
            <person name="Manfio G.P."/>
            <person name="Maranhao A.Q."/>
            <person name="Martins W.S."/>
            <person name="di Mauro S.M.Z."/>
            <person name="de Medeiros S.R.B."/>
            <person name="Meissner R.V."/>
            <person name="Moreira M.A.M."/>
            <person name="Nascimento F.F."/>
            <person name="Nicolas M.F."/>
            <person name="Oliveira J.G."/>
            <person name="Oliveira S.C."/>
            <person name="Paixao R.F.C."/>
            <person name="Parente J.A."/>
            <person name="Pedrosa F.O."/>
            <person name="Pena S.D.J."/>
            <person name="Pereira J.O."/>
            <person name="Pereira M."/>
            <person name="Pinto L.S.R.C."/>
            <person name="Pinto L.S."/>
            <person name="Porto J.I.R."/>
            <person name="Potrich D.P."/>
            <person name="Ramalho-Neto C.E."/>
            <person name="Reis A.M.M."/>
            <person name="Rigo L.U."/>
            <person name="Rondinelli E."/>
            <person name="Santos E.B.P."/>
            <person name="Santos F.R."/>
            <person name="Schneider M.P.C."/>
            <person name="Seuanez H.N."/>
            <person name="Silva A.M.R."/>
            <person name="da Silva A.L.C."/>
            <person name="Silva D.W."/>
            <person name="Silva R."/>
            <person name="Simoes I.C."/>
            <person name="Simon D."/>
            <person name="Soares C.M.A."/>
            <person name="Soares R.B.A."/>
            <person name="Souza E.M."/>
            <person name="Souza K.R.L."/>
            <person name="Souza R.C."/>
            <person name="Steffens M.B.R."/>
            <person name="Steindel M."/>
            <person name="Teixeira S.R."/>
            <person name="Urmenyi T."/>
            <person name="Vettore A."/>
            <person name="Wassem R."/>
            <person name="Zaha A."/>
            <person name="Simpson A.J.G."/>
        </authorList>
    </citation>
    <scope>NUCLEOTIDE SEQUENCE [LARGE SCALE GENOMIC DNA]</scope>
    <source>
        <strain>ATCC 12472 / DSM 30191 / JCM 1249 / CCUG 213 / NBRC 12614 / NCIMB 9131 / NCTC 9757 / MK</strain>
    </source>
</reference>
<sequence>MQNSASEFLKPRLIDVQPVSATHARVSMEPFERGYAHTLGNSLRRILLSSMPGYAPTEVTIAGVLHEYSALDGVREDVVDILLNLKGVVLKLHGRDSVVLTLKKEGEGAVLASDIELPHDVEVINPEHVICHISSGGKIDMEVKVEKGRGYQPVSARTSHDDNRSIGTIQLDASFSPVRRVSFAVESARVEQRTDLDRLVLDIETNGVIEPEQAVRNAARILMDQLSIFADLQGTAVEEVVEKAPPIDPILLRPVDDLELTVRSANCLKAENIYYIGDLIQRTETELLKTPNLGRKSLNEIKEVLASKGLTLGMKLENWPPAGLEKP</sequence>
<name>RPOA_CHRVO</name>
<evidence type="ECO:0000255" key="1">
    <source>
        <dbReference type="HAMAP-Rule" id="MF_00059"/>
    </source>
</evidence>
<organism>
    <name type="scientific">Chromobacterium violaceum (strain ATCC 12472 / DSM 30191 / JCM 1249 / CCUG 213 / NBRC 12614 / NCIMB 9131 / NCTC 9757 / MK)</name>
    <dbReference type="NCBI Taxonomy" id="243365"/>
    <lineage>
        <taxon>Bacteria</taxon>
        <taxon>Pseudomonadati</taxon>
        <taxon>Pseudomonadota</taxon>
        <taxon>Betaproteobacteria</taxon>
        <taxon>Neisseriales</taxon>
        <taxon>Chromobacteriaceae</taxon>
        <taxon>Chromobacterium</taxon>
    </lineage>
</organism>
<gene>
    <name evidence="1" type="primary">rpoA</name>
    <name type="ordered locus">CV_4160</name>
</gene>
<comment type="function">
    <text evidence="1">DNA-dependent RNA polymerase catalyzes the transcription of DNA into RNA using the four ribonucleoside triphosphates as substrates.</text>
</comment>
<comment type="catalytic activity">
    <reaction evidence="1">
        <text>RNA(n) + a ribonucleoside 5'-triphosphate = RNA(n+1) + diphosphate</text>
        <dbReference type="Rhea" id="RHEA:21248"/>
        <dbReference type="Rhea" id="RHEA-COMP:14527"/>
        <dbReference type="Rhea" id="RHEA-COMP:17342"/>
        <dbReference type="ChEBI" id="CHEBI:33019"/>
        <dbReference type="ChEBI" id="CHEBI:61557"/>
        <dbReference type="ChEBI" id="CHEBI:140395"/>
        <dbReference type="EC" id="2.7.7.6"/>
    </reaction>
</comment>
<comment type="subunit">
    <text evidence="1">Homodimer. The RNAP catalytic core consists of 2 alpha, 1 beta, 1 beta' and 1 omega subunit. When a sigma factor is associated with the core the holoenzyme is formed, which can initiate transcription.</text>
</comment>
<comment type="domain">
    <text evidence="1">The N-terminal domain is essential for RNAP assembly and basal transcription, whereas the C-terminal domain is involved in interaction with transcriptional regulators and with upstream promoter elements.</text>
</comment>
<comment type="similarity">
    <text evidence="1">Belongs to the RNA polymerase alpha chain family.</text>
</comment>
<dbReference type="EC" id="2.7.7.6" evidence="1"/>
<dbReference type="EMBL" id="AE016825">
    <property type="protein sequence ID" value="AAQ61821.1"/>
    <property type="molecule type" value="Genomic_DNA"/>
</dbReference>
<dbReference type="RefSeq" id="WP_011137707.1">
    <property type="nucleotide sequence ID" value="NC_005085.1"/>
</dbReference>
<dbReference type="SMR" id="Q7NQH7"/>
<dbReference type="STRING" id="243365.CV_4160"/>
<dbReference type="GeneID" id="66366368"/>
<dbReference type="KEGG" id="cvi:CV_4160"/>
<dbReference type="eggNOG" id="COG0202">
    <property type="taxonomic scope" value="Bacteria"/>
</dbReference>
<dbReference type="HOGENOM" id="CLU_053084_0_1_4"/>
<dbReference type="OrthoDB" id="9805706at2"/>
<dbReference type="Proteomes" id="UP000001424">
    <property type="component" value="Chromosome"/>
</dbReference>
<dbReference type="GO" id="GO:0005737">
    <property type="term" value="C:cytoplasm"/>
    <property type="evidence" value="ECO:0007669"/>
    <property type="project" value="UniProtKB-ARBA"/>
</dbReference>
<dbReference type="GO" id="GO:0000428">
    <property type="term" value="C:DNA-directed RNA polymerase complex"/>
    <property type="evidence" value="ECO:0007669"/>
    <property type="project" value="UniProtKB-KW"/>
</dbReference>
<dbReference type="GO" id="GO:0003677">
    <property type="term" value="F:DNA binding"/>
    <property type="evidence" value="ECO:0007669"/>
    <property type="project" value="UniProtKB-UniRule"/>
</dbReference>
<dbReference type="GO" id="GO:0003899">
    <property type="term" value="F:DNA-directed RNA polymerase activity"/>
    <property type="evidence" value="ECO:0007669"/>
    <property type="project" value="UniProtKB-UniRule"/>
</dbReference>
<dbReference type="GO" id="GO:0046983">
    <property type="term" value="F:protein dimerization activity"/>
    <property type="evidence" value="ECO:0007669"/>
    <property type="project" value="InterPro"/>
</dbReference>
<dbReference type="GO" id="GO:0006351">
    <property type="term" value="P:DNA-templated transcription"/>
    <property type="evidence" value="ECO:0007669"/>
    <property type="project" value="UniProtKB-UniRule"/>
</dbReference>
<dbReference type="CDD" id="cd06928">
    <property type="entry name" value="RNAP_alpha_NTD"/>
    <property type="match status" value="1"/>
</dbReference>
<dbReference type="FunFam" id="1.10.150.20:FF:000001">
    <property type="entry name" value="DNA-directed RNA polymerase subunit alpha"/>
    <property type="match status" value="1"/>
</dbReference>
<dbReference type="FunFam" id="2.170.120.12:FF:000001">
    <property type="entry name" value="DNA-directed RNA polymerase subunit alpha"/>
    <property type="match status" value="1"/>
</dbReference>
<dbReference type="Gene3D" id="1.10.150.20">
    <property type="entry name" value="5' to 3' exonuclease, C-terminal subdomain"/>
    <property type="match status" value="1"/>
</dbReference>
<dbReference type="Gene3D" id="2.170.120.12">
    <property type="entry name" value="DNA-directed RNA polymerase, insert domain"/>
    <property type="match status" value="1"/>
</dbReference>
<dbReference type="Gene3D" id="3.30.1360.10">
    <property type="entry name" value="RNA polymerase, RBP11-like subunit"/>
    <property type="match status" value="1"/>
</dbReference>
<dbReference type="HAMAP" id="MF_00059">
    <property type="entry name" value="RNApol_bact_RpoA"/>
    <property type="match status" value="1"/>
</dbReference>
<dbReference type="InterPro" id="IPR011262">
    <property type="entry name" value="DNA-dir_RNA_pol_insert"/>
</dbReference>
<dbReference type="InterPro" id="IPR011263">
    <property type="entry name" value="DNA-dir_RNA_pol_RpoA/D/Rpb3"/>
</dbReference>
<dbReference type="InterPro" id="IPR011773">
    <property type="entry name" value="DNA-dir_RpoA"/>
</dbReference>
<dbReference type="InterPro" id="IPR036603">
    <property type="entry name" value="RBP11-like"/>
</dbReference>
<dbReference type="InterPro" id="IPR011260">
    <property type="entry name" value="RNAP_asu_C"/>
</dbReference>
<dbReference type="InterPro" id="IPR036643">
    <property type="entry name" value="RNApol_insert_sf"/>
</dbReference>
<dbReference type="NCBIfam" id="NF003513">
    <property type="entry name" value="PRK05182.1-2"/>
    <property type="match status" value="1"/>
</dbReference>
<dbReference type="NCBIfam" id="NF003519">
    <property type="entry name" value="PRK05182.2-5"/>
    <property type="match status" value="1"/>
</dbReference>
<dbReference type="NCBIfam" id="TIGR02027">
    <property type="entry name" value="rpoA"/>
    <property type="match status" value="1"/>
</dbReference>
<dbReference type="Pfam" id="PF01000">
    <property type="entry name" value="RNA_pol_A_bac"/>
    <property type="match status" value="1"/>
</dbReference>
<dbReference type="Pfam" id="PF03118">
    <property type="entry name" value="RNA_pol_A_CTD"/>
    <property type="match status" value="1"/>
</dbReference>
<dbReference type="Pfam" id="PF01193">
    <property type="entry name" value="RNA_pol_L"/>
    <property type="match status" value="1"/>
</dbReference>
<dbReference type="SMART" id="SM00662">
    <property type="entry name" value="RPOLD"/>
    <property type="match status" value="1"/>
</dbReference>
<dbReference type="SUPFAM" id="SSF47789">
    <property type="entry name" value="C-terminal domain of RNA polymerase alpha subunit"/>
    <property type="match status" value="1"/>
</dbReference>
<dbReference type="SUPFAM" id="SSF56553">
    <property type="entry name" value="Insert subdomain of RNA polymerase alpha subunit"/>
    <property type="match status" value="1"/>
</dbReference>
<dbReference type="SUPFAM" id="SSF55257">
    <property type="entry name" value="RBP11-like subunits of RNA polymerase"/>
    <property type="match status" value="1"/>
</dbReference>